<feature type="chain" id="PRO_1000023687" description="Peptide chain release factor 3">
    <location>
        <begin position="1"/>
        <end position="514"/>
    </location>
</feature>
<feature type="domain" description="tr-type G">
    <location>
        <begin position="8"/>
        <end position="268"/>
    </location>
</feature>
<feature type="binding site" evidence="1">
    <location>
        <begin position="17"/>
        <end position="24"/>
    </location>
    <ligand>
        <name>GTP</name>
        <dbReference type="ChEBI" id="CHEBI:37565"/>
    </ligand>
</feature>
<feature type="binding site" evidence="1">
    <location>
        <begin position="85"/>
        <end position="89"/>
    </location>
    <ligand>
        <name>GTP</name>
        <dbReference type="ChEBI" id="CHEBI:37565"/>
    </ligand>
</feature>
<feature type="binding site" evidence="1">
    <location>
        <begin position="139"/>
        <end position="142"/>
    </location>
    <ligand>
        <name>GTP</name>
        <dbReference type="ChEBI" id="CHEBI:37565"/>
    </ligand>
</feature>
<sequence>MSLTEEIKKRRTFAIISHPDAGKTTITEQLLYFGGEIREAGTVKGKKSGTFAKSDWMDIEKQRGISVTSSVMQFDYAGKRVNILDTPGHEDFSEDTYRTLMAVDAAIMVVDSAKGIEAQTKKLFEVVKHRNIPVFTFINKLDRDGREPLELLEELEEVLGIASYPMNWPIGMGRAFEGLYDLHNKRLELYKGDERFASIEDGDQLFANNPFYEQVKEDIELLQEAGNDFSEQAILDGDLTPVFFGSALTNFGVQTFLDTFLEFAPEPHGHKTTEGNVVDPLAKDFSGFVFKIQANMDPKHRDRIAFVRIVSGEFERGMGVNLTRTGKGAKLSNVTQFMAESRENVTNAVAGDIIGVYDTGTYQVGDTLTVGKNKFEFEPLPTFTPEIFMKVSPKNVMKQKSFHKGIEQLVQEGAIQLYKNYQTGEYMLGAVGQLQFEVFKHRMEGEYNAEVVMTPMGKKTVRWISEDDLDQRMSSSRNILAKDRFDQPVFLFENDFALRWFADKYPDVTLEEKM</sequence>
<gene>
    <name evidence="1" type="primary">prfC</name>
    <name type="ordered locus">MGAS10270_Spy1226</name>
</gene>
<proteinExistence type="inferred from homology"/>
<dbReference type="EMBL" id="CP000260">
    <property type="protein sequence ID" value="ABF34290.1"/>
    <property type="molecule type" value="Genomic_DNA"/>
</dbReference>
<dbReference type="SMR" id="Q1JG54"/>
<dbReference type="KEGG" id="sph:MGAS10270_Spy1226"/>
<dbReference type="HOGENOM" id="CLU_002794_2_1_9"/>
<dbReference type="Proteomes" id="UP000002436">
    <property type="component" value="Chromosome"/>
</dbReference>
<dbReference type="GO" id="GO:0005829">
    <property type="term" value="C:cytosol"/>
    <property type="evidence" value="ECO:0007669"/>
    <property type="project" value="TreeGrafter"/>
</dbReference>
<dbReference type="GO" id="GO:0005525">
    <property type="term" value="F:GTP binding"/>
    <property type="evidence" value="ECO:0007669"/>
    <property type="project" value="UniProtKB-UniRule"/>
</dbReference>
<dbReference type="GO" id="GO:0003924">
    <property type="term" value="F:GTPase activity"/>
    <property type="evidence" value="ECO:0007669"/>
    <property type="project" value="InterPro"/>
</dbReference>
<dbReference type="GO" id="GO:0016150">
    <property type="term" value="F:translation release factor activity, codon nonspecific"/>
    <property type="evidence" value="ECO:0007669"/>
    <property type="project" value="TreeGrafter"/>
</dbReference>
<dbReference type="GO" id="GO:0016149">
    <property type="term" value="F:translation release factor activity, codon specific"/>
    <property type="evidence" value="ECO:0007669"/>
    <property type="project" value="UniProtKB-UniRule"/>
</dbReference>
<dbReference type="GO" id="GO:0006449">
    <property type="term" value="P:regulation of translational termination"/>
    <property type="evidence" value="ECO:0007669"/>
    <property type="project" value="UniProtKB-UniRule"/>
</dbReference>
<dbReference type="CDD" id="cd04169">
    <property type="entry name" value="RF3"/>
    <property type="match status" value="1"/>
</dbReference>
<dbReference type="CDD" id="cd16259">
    <property type="entry name" value="RF3_III"/>
    <property type="match status" value="1"/>
</dbReference>
<dbReference type="FunFam" id="2.40.30.10:FF:000040">
    <property type="entry name" value="Peptide chain release factor 3"/>
    <property type="match status" value="1"/>
</dbReference>
<dbReference type="FunFam" id="3.30.70.3280:FF:000001">
    <property type="entry name" value="Peptide chain release factor 3"/>
    <property type="match status" value="1"/>
</dbReference>
<dbReference type="FunFam" id="3.40.50.300:FF:000542">
    <property type="entry name" value="Peptide chain release factor 3"/>
    <property type="match status" value="1"/>
</dbReference>
<dbReference type="Gene3D" id="3.40.50.300">
    <property type="entry name" value="P-loop containing nucleotide triphosphate hydrolases"/>
    <property type="match status" value="1"/>
</dbReference>
<dbReference type="Gene3D" id="3.30.70.3280">
    <property type="entry name" value="Peptide chain release factor 3, domain III"/>
    <property type="match status" value="1"/>
</dbReference>
<dbReference type="Gene3D" id="2.40.30.10">
    <property type="entry name" value="Translation factors"/>
    <property type="match status" value="1"/>
</dbReference>
<dbReference type="HAMAP" id="MF_00072">
    <property type="entry name" value="Rel_fac_3"/>
    <property type="match status" value="1"/>
</dbReference>
<dbReference type="InterPro" id="IPR053905">
    <property type="entry name" value="EF-G-like_DII"/>
</dbReference>
<dbReference type="InterPro" id="IPR035647">
    <property type="entry name" value="EFG_III/V"/>
</dbReference>
<dbReference type="InterPro" id="IPR031157">
    <property type="entry name" value="G_TR_CS"/>
</dbReference>
<dbReference type="InterPro" id="IPR027417">
    <property type="entry name" value="P-loop_NTPase"/>
</dbReference>
<dbReference type="InterPro" id="IPR004548">
    <property type="entry name" value="PrfC"/>
</dbReference>
<dbReference type="InterPro" id="IPR032090">
    <property type="entry name" value="RF3_C"/>
</dbReference>
<dbReference type="InterPro" id="IPR038467">
    <property type="entry name" value="RF3_dom_3_sf"/>
</dbReference>
<dbReference type="InterPro" id="IPR041732">
    <property type="entry name" value="RF3_GTP-bd"/>
</dbReference>
<dbReference type="InterPro" id="IPR005225">
    <property type="entry name" value="Small_GTP-bd"/>
</dbReference>
<dbReference type="InterPro" id="IPR000795">
    <property type="entry name" value="T_Tr_GTP-bd_dom"/>
</dbReference>
<dbReference type="InterPro" id="IPR009000">
    <property type="entry name" value="Transl_B-barrel_sf"/>
</dbReference>
<dbReference type="NCBIfam" id="TIGR00503">
    <property type="entry name" value="prfC"/>
    <property type="match status" value="1"/>
</dbReference>
<dbReference type="NCBIfam" id="NF001964">
    <property type="entry name" value="PRK00741.1"/>
    <property type="match status" value="1"/>
</dbReference>
<dbReference type="NCBIfam" id="TIGR00231">
    <property type="entry name" value="small_GTP"/>
    <property type="match status" value="1"/>
</dbReference>
<dbReference type="PANTHER" id="PTHR43556">
    <property type="entry name" value="PEPTIDE CHAIN RELEASE FACTOR RF3"/>
    <property type="match status" value="1"/>
</dbReference>
<dbReference type="PANTHER" id="PTHR43556:SF2">
    <property type="entry name" value="PEPTIDE CHAIN RELEASE FACTOR RF3"/>
    <property type="match status" value="1"/>
</dbReference>
<dbReference type="Pfam" id="PF22042">
    <property type="entry name" value="EF-G_D2"/>
    <property type="match status" value="1"/>
</dbReference>
<dbReference type="Pfam" id="PF00009">
    <property type="entry name" value="GTP_EFTU"/>
    <property type="match status" value="1"/>
</dbReference>
<dbReference type="Pfam" id="PF16658">
    <property type="entry name" value="RF3_C"/>
    <property type="match status" value="1"/>
</dbReference>
<dbReference type="PRINTS" id="PR00315">
    <property type="entry name" value="ELONGATNFCT"/>
</dbReference>
<dbReference type="PRINTS" id="PR01037">
    <property type="entry name" value="TCRTETOQM"/>
</dbReference>
<dbReference type="SUPFAM" id="SSF54980">
    <property type="entry name" value="EF-G C-terminal domain-like"/>
    <property type="match status" value="1"/>
</dbReference>
<dbReference type="SUPFAM" id="SSF52540">
    <property type="entry name" value="P-loop containing nucleoside triphosphate hydrolases"/>
    <property type="match status" value="1"/>
</dbReference>
<dbReference type="SUPFAM" id="SSF50447">
    <property type="entry name" value="Translation proteins"/>
    <property type="match status" value="1"/>
</dbReference>
<dbReference type="PROSITE" id="PS00301">
    <property type="entry name" value="G_TR_1"/>
    <property type="match status" value="1"/>
</dbReference>
<dbReference type="PROSITE" id="PS51722">
    <property type="entry name" value="G_TR_2"/>
    <property type="match status" value="1"/>
</dbReference>
<protein>
    <recommendedName>
        <fullName evidence="1">Peptide chain release factor 3</fullName>
        <shortName evidence="1">RF-3</shortName>
    </recommendedName>
</protein>
<name>RF3_STRPD</name>
<evidence type="ECO:0000255" key="1">
    <source>
        <dbReference type="HAMAP-Rule" id="MF_00072"/>
    </source>
</evidence>
<keyword id="KW-0963">Cytoplasm</keyword>
<keyword id="KW-0342">GTP-binding</keyword>
<keyword id="KW-0547">Nucleotide-binding</keyword>
<keyword id="KW-0648">Protein biosynthesis</keyword>
<reference key="1">
    <citation type="journal article" date="2006" name="Proc. Natl. Acad. Sci. U.S.A.">
        <title>Molecular genetic anatomy of inter- and intraserotype variation in the human bacterial pathogen group A Streptococcus.</title>
        <authorList>
            <person name="Beres S.B."/>
            <person name="Richter E.W."/>
            <person name="Nagiec M.J."/>
            <person name="Sumby P."/>
            <person name="Porcella S.F."/>
            <person name="DeLeo F.R."/>
            <person name="Musser J.M."/>
        </authorList>
    </citation>
    <scope>NUCLEOTIDE SEQUENCE [LARGE SCALE GENOMIC DNA]</scope>
    <source>
        <strain>MGAS10270</strain>
    </source>
</reference>
<accession>Q1JG54</accession>
<comment type="function">
    <text evidence="1">Increases the formation of ribosomal termination complexes and stimulates activities of RF-1 and RF-2. It binds guanine nucleotides and has strong preference for UGA stop codons. It may interact directly with the ribosome. The stimulation of RF-1 and RF-2 is significantly reduced by GTP and GDP, but not by GMP.</text>
</comment>
<comment type="subcellular location">
    <subcellularLocation>
        <location evidence="1">Cytoplasm</location>
    </subcellularLocation>
</comment>
<comment type="similarity">
    <text evidence="1">Belongs to the TRAFAC class translation factor GTPase superfamily. Classic translation factor GTPase family. PrfC subfamily.</text>
</comment>
<organism>
    <name type="scientific">Streptococcus pyogenes serotype M2 (strain MGAS10270)</name>
    <dbReference type="NCBI Taxonomy" id="370552"/>
    <lineage>
        <taxon>Bacteria</taxon>
        <taxon>Bacillati</taxon>
        <taxon>Bacillota</taxon>
        <taxon>Bacilli</taxon>
        <taxon>Lactobacillales</taxon>
        <taxon>Streptococcaceae</taxon>
        <taxon>Streptococcus</taxon>
    </lineage>
</organism>